<reference evidence="5" key="1">
    <citation type="journal article" date="1998" name="Science">
        <title>Genome sequence of the nematode C. elegans: a platform for investigating biology.</title>
        <authorList>
            <consortium name="The C. elegans sequencing consortium"/>
        </authorList>
    </citation>
    <scope>NUCLEOTIDE SEQUENCE [LARGE SCALE GENOMIC DNA]</scope>
    <source>
        <strain evidence="5">Bristol N2</strain>
    </source>
</reference>
<reference evidence="4" key="2">
    <citation type="journal article" date="2008" name="Mol. Cells">
        <title>A novel calcineurin-interacting protein, CNP-3, modulates calcineurin deficient phenotypes in Caenorhabditis elegans.</title>
        <authorList>
            <person name="Kim Y.H."/>
            <person name="Song H.O."/>
            <person name="Ko K.M."/>
            <person name="Singaravelu G."/>
            <person name="Jee C."/>
            <person name="Kang J."/>
            <person name="Ahnn J."/>
        </authorList>
    </citation>
    <scope>SUBCELLULAR LOCATION</scope>
    <scope>DEVELOPMENTAL STAGE</scope>
</reference>
<gene>
    <name evidence="6" type="primary">cnp-3</name>
    <name evidence="6" type="ORF">T23C6.3</name>
</gene>
<sequence>MRSLKRENSGSALSVRSSDSEGDSYHNMDIKKLTNKVKEIDISAFDRTRLFNPRKQRSCHKRAEPVSEEHRKKESSKNSREYTKRNRDEIVTCQKLFSEITAIMRRFKQLTEEMSVETVEVKIKSMIKDCQEMLTKYTNLDSNDRFNIGIPEAEDFLAIFREKAHATMLFEHRPESPNMYTENLFKLREQYHKLTDHKDNLNSSKDKTNYASSKSRLNQRIVREQLKSDCWVCWKSINTMMVQGEQLQEYNNELKKDIWNNILAVYHQIFTMFCKYPEYADKEKMERIVEYFAPVSRTPGHLSVVWNPMPNVVKSPRSEEIPEIKVEYEEVPSSSTFLSNNETTIASDMDMSIDRPQSMDMSQTLSPEQTLSPREKLQVQDRKISTTQETPPALPSPSGTLTLPTVPASTLKRKEFGDLLACPTGKRVTIDEPNRAERTETIMPSRQMMYPMVNYQALPMPPQSIPSMIPPFIPTIPSTSTMPPMMPYPNVLLTAAPGDVAPIDSLTPSFLRALEQQKLMAAFLNHAFQKCQK</sequence>
<proteinExistence type="evidence at transcript level"/>
<evidence type="ECO:0000256" key="1">
    <source>
        <dbReference type="SAM" id="MobiDB-lite"/>
    </source>
</evidence>
<evidence type="ECO:0000269" key="2">
    <source>
    </source>
</evidence>
<evidence type="ECO:0000303" key="3">
    <source>
    </source>
</evidence>
<evidence type="ECO:0000305" key="4"/>
<evidence type="ECO:0000312" key="5">
    <source>
        <dbReference type="Proteomes" id="UP000001940"/>
    </source>
</evidence>
<evidence type="ECO:0000312" key="6">
    <source>
        <dbReference type="WormBase" id="T23C6.3"/>
    </source>
</evidence>
<organism evidence="5">
    <name type="scientific">Caenorhabditis elegans</name>
    <dbReference type="NCBI Taxonomy" id="6239"/>
    <lineage>
        <taxon>Eukaryota</taxon>
        <taxon>Metazoa</taxon>
        <taxon>Ecdysozoa</taxon>
        <taxon>Nematoda</taxon>
        <taxon>Chromadorea</taxon>
        <taxon>Rhabditida</taxon>
        <taxon>Rhabditina</taxon>
        <taxon>Rhabditomorpha</taxon>
        <taxon>Rhabditoidea</taxon>
        <taxon>Rhabditidae</taxon>
        <taxon>Peloderinae</taxon>
        <taxon>Caenorhabditis</taxon>
    </lineage>
</organism>
<keyword id="KW-0539">Nucleus</keyword>
<keyword id="KW-1185">Reference proteome</keyword>
<accession>O02039</accession>
<comment type="subcellular location">
    <subcellularLocation>
        <location evidence="2">Nucleus</location>
    </subcellularLocation>
</comment>
<comment type="developmental stage">
    <text evidence="2">Expression begins at the gastrulation stage. Expressed predominantly in the intestine from the comma stage onwards. In early larval stages, expressed in hypodermis and intestine. At L3 larval stage expressed transiently in spermatheca and dorsal uterus.</text>
</comment>
<feature type="chain" id="PRO_0000436925" description="Calcineurin-interacting protein 3" evidence="4">
    <location>
        <begin position="1"/>
        <end position="533"/>
    </location>
</feature>
<feature type="region of interest" description="Disordered" evidence="1">
    <location>
        <begin position="1"/>
        <end position="30"/>
    </location>
</feature>
<feature type="region of interest" description="Disordered" evidence="1">
    <location>
        <begin position="53"/>
        <end position="85"/>
    </location>
</feature>
<feature type="region of interest" description="Disordered" evidence="1">
    <location>
        <begin position="359"/>
        <end position="404"/>
    </location>
</feature>
<feature type="compositionally biased region" description="Basic and acidic residues" evidence="1">
    <location>
        <begin position="61"/>
        <end position="85"/>
    </location>
</feature>
<feature type="compositionally biased region" description="Polar residues" evidence="1">
    <location>
        <begin position="359"/>
        <end position="372"/>
    </location>
</feature>
<feature type="compositionally biased region" description="Basic and acidic residues" evidence="1">
    <location>
        <begin position="373"/>
        <end position="384"/>
    </location>
</feature>
<protein>
    <recommendedName>
        <fullName evidence="3">Calcineurin-interacting protein 3</fullName>
    </recommendedName>
    <alternativeName>
        <fullName evidence="6">Calcineurin binding protein 3</fullName>
    </alternativeName>
</protein>
<dbReference type="EMBL" id="BX284606">
    <property type="protein sequence ID" value="CCD61704.1"/>
    <property type="molecule type" value="Genomic_DNA"/>
</dbReference>
<dbReference type="PIR" id="T15116">
    <property type="entry name" value="T15116"/>
</dbReference>
<dbReference type="RefSeq" id="NP_510776.1">
    <property type="nucleotide sequence ID" value="NM_078375.9"/>
</dbReference>
<dbReference type="SMR" id="O02039"/>
<dbReference type="FunCoup" id="O02039">
    <property type="interactions" value="1"/>
</dbReference>
<dbReference type="IntAct" id="O02039">
    <property type="interactions" value="1"/>
</dbReference>
<dbReference type="STRING" id="6239.T23C6.3.1"/>
<dbReference type="PaxDb" id="6239-T23C6.3"/>
<dbReference type="EnsemblMetazoa" id="T23C6.3.1">
    <property type="protein sequence ID" value="T23C6.3.1"/>
    <property type="gene ID" value="WBGene00020725"/>
</dbReference>
<dbReference type="GeneID" id="181752"/>
<dbReference type="KEGG" id="cel:CELE_T23C6.3"/>
<dbReference type="UCSC" id="T23C6.3.1">
    <property type="organism name" value="c. elegans"/>
</dbReference>
<dbReference type="AGR" id="WB:WBGene00020725"/>
<dbReference type="CTD" id="181752"/>
<dbReference type="WormBase" id="T23C6.3">
    <property type="protein sequence ID" value="CE07528"/>
    <property type="gene ID" value="WBGene00020725"/>
    <property type="gene designation" value="cnp-3"/>
</dbReference>
<dbReference type="eggNOG" id="ENOG502TGY3">
    <property type="taxonomic scope" value="Eukaryota"/>
</dbReference>
<dbReference type="GeneTree" id="ENSGT00970000196737"/>
<dbReference type="HOGENOM" id="CLU_464008_0_0_1"/>
<dbReference type="InParanoid" id="O02039"/>
<dbReference type="OMA" id="FLNHAFQ"/>
<dbReference type="OrthoDB" id="5877056at2759"/>
<dbReference type="PRO" id="PR:O02039"/>
<dbReference type="Proteomes" id="UP000001940">
    <property type="component" value="Chromosome X"/>
</dbReference>
<dbReference type="Bgee" id="WBGene00020725">
    <property type="expression patterns" value="Expressed in embryo and 4 other cell types or tissues"/>
</dbReference>
<dbReference type="GO" id="GO:0005634">
    <property type="term" value="C:nucleus"/>
    <property type="evidence" value="ECO:0007669"/>
    <property type="project" value="UniProtKB-SubCell"/>
</dbReference>
<name>CNP3_CAEEL</name>